<gene>
    <name evidence="1" type="primary">rpoY</name>
    <name type="ordered locus">SaurJH9_1150</name>
</gene>
<keyword id="KW-0240">DNA-directed RNA polymerase</keyword>
<keyword id="KW-0548">Nucleotidyltransferase</keyword>
<keyword id="KW-0804">Transcription</keyword>
<keyword id="KW-0808">Transferase</keyword>
<name>RPOY_STAA9</name>
<accession>A5IRX7</accession>
<organism>
    <name type="scientific">Staphylococcus aureus (strain JH9)</name>
    <dbReference type="NCBI Taxonomy" id="359786"/>
    <lineage>
        <taxon>Bacteria</taxon>
        <taxon>Bacillati</taxon>
        <taxon>Bacillota</taxon>
        <taxon>Bacilli</taxon>
        <taxon>Bacillales</taxon>
        <taxon>Staphylococcaceae</taxon>
        <taxon>Staphylococcus</taxon>
    </lineage>
</organism>
<dbReference type="EC" id="2.7.7.6" evidence="1"/>
<dbReference type="EMBL" id="CP000703">
    <property type="protein sequence ID" value="ABQ48950.1"/>
    <property type="molecule type" value="Genomic_DNA"/>
</dbReference>
<dbReference type="RefSeq" id="WP_000257888.1">
    <property type="nucleotide sequence ID" value="NC_009487.1"/>
</dbReference>
<dbReference type="SMR" id="A5IRX7"/>
<dbReference type="KEGG" id="saj:SaurJH9_1150"/>
<dbReference type="HOGENOM" id="CLU_187518_1_0_9"/>
<dbReference type="GO" id="GO:0000428">
    <property type="term" value="C:DNA-directed RNA polymerase complex"/>
    <property type="evidence" value="ECO:0007669"/>
    <property type="project" value="UniProtKB-KW"/>
</dbReference>
<dbReference type="GO" id="GO:0003677">
    <property type="term" value="F:DNA binding"/>
    <property type="evidence" value="ECO:0007669"/>
    <property type="project" value="UniProtKB-UniRule"/>
</dbReference>
<dbReference type="GO" id="GO:0003899">
    <property type="term" value="F:DNA-directed RNA polymerase activity"/>
    <property type="evidence" value="ECO:0007669"/>
    <property type="project" value="UniProtKB-UniRule"/>
</dbReference>
<dbReference type="GO" id="GO:0006351">
    <property type="term" value="P:DNA-templated transcription"/>
    <property type="evidence" value="ECO:0007669"/>
    <property type="project" value="UniProtKB-UniRule"/>
</dbReference>
<dbReference type="Gene3D" id="3.10.20.730">
    <property type="entry name" value="RNAP, epsilon subunit-like"/>
    <property type="match status" value="1"/>
</dbReference>
<dbReference type="HAMAP" id="MF_01553">
    <property type="entry name" value="RNApol_bact_RpoY"/>
    <property type="match status" value="1"/>
</dbReference>
<dbReference type="InterPro" id="IPR009907">
    <property type="entry name" value="RpoY"/>
</dbReference>
<dbReference type="NCBIfam" id="NF010188">
    <property type="entry name" value="PRK13667.1"/>
    <property type="match status" value="1"/>
</dbReference>
<dbReference type="Pfam" id="PF07288">
    <property type="entry name" value="RpoY"/>
    <property type="match status" value="1"/>
</dbReference>
<evidence type="ECO:0000255" key="1">
    <source>
        <dbReference type="HAMAP-Rule" id="MF_01553"/>
    </source>
</evidence>
<proteinExistence type="inferred from homology"/>
<comment type="function">
    <text evidence="1">A non-essential component of RNA polymerase (RNAP).</text>
</comment>
<comment type="catalytic activity">
    <reaction evidence="1">
        <text>RNA(n) + a ribonucleoside 5'-triphosphate = RNA(n+1) + diphosphate</text>
        <dbReference type="Rhea" id="RHEA:21248"/>
        <dbReference type="Rhea" id="RHEA-COMP:14527"/>
        <dbReference type="Rhea" id="RHEA-COMP:17342"/>
        <dbReference type="ChEBI" id="CHEBI:33019"/>
        <dbReference type="ChEBI" id="CHEBI:61557"/>
        <dbReference type="ChEBI" id="CHEBI:140395"/>
        <dbReference type="EC" id="2.7.7.6"/>
    </reaction>
</comment>
<comment type="subunit">
    <text evidence="1">RNAP is composed of a core of 2 alpha, a beta and a beta' subunit. The core is associated with a delta subunit, and at least one of epsilon or omega. When a sigma factor is associated with the core the holoenzyme is formed, which can initiate transcription.</text>
</comment>
<comment type="similarity">
    <text evidence="1">Belongs to the RNA polymerase subunit epsilon family.</text>
</comment>
<feature type="chain" id="PRO_1000087754" description="DNA-directed RNA polymerase subunit epsilon">
    <location>
        <begin position="1"/>
        <end position="72"/>
    </location>
</feature>
<protein>
    <recommendedName>
        <fullName evidence="1">DNA-directed RNA polymerase subunit epsilon</fullName>
        <shortName evidence="1">RNAP epsilon subunit</shortName>
        <ecNumber evidence="1">2.7.7.6</ecNumber>
    </recommendedName>
    <alternativeName>
        <fullName evidence="1">RNA polymerase epsilon subunit</fullName>
    </alternativeName>
    <alternativeName>
        <fullName evidence="1">Transcriptase subunit epsilon</fullName>
    </alternativeName>
</protein>
<sequence length="72" mass="8752">MAVFKVFYQHNRDEVIVRENTQSLYVEAQTEEQVRRYLKDRNFNIEFITKLEGAHLDYEKENSEHFNVEIAK</sequence>
<reference key="1">
    <citation type="submission" date="2007-05" db="EMBL/GenBank/DDBJ databases">
        <title>Complete sequence of chromosome of Staphylococcus aureus subsp. aureus JH9.</title>
        <authorList>
            <consortium name="US DOE Joint Genome Institute"/>
            <person name="Copeland A."/>
            <person name="Lucas S."/>
            <person name="Lapidus A."/>
            <person name="Barry K."/>
            <person name="Detter J.C."/>
            <person name="Glavina del Rio T."/>
            <person name="Hammon N."/>
            <person name="Israni S."/>
            <person name="Pitluck S."/>
            <person name="Chain P."/>
            <person name="Malfatti S."/>
            <person name="Shin M."/>
            <person name="Vergez L."/>
            <person name="Schmutz J."/>
            <person name="Larimer F."/>
            <person name="Land M."/>
            <person name="Hauser L."/>
            <person name="Kyrpides N."/>
            <person name="Kim E."/>
            <person name="Tomasz A."/>
            <person name="Richardson P."/>
        </authorList>
    </citation>
    <scope>NUCLEOTIDE SEQUENCE [LARGE SCALE GENOMIC DNA]</scope>
    <source>
        <strain>JH9</strain>
    </source>
</reference>